<protein>
    <recommendedName>
        <fullName evidence="1">Small ribosomal subunit protein uS9</fullName>
    </recommendedName>
    <alternativeName>
        <fullName evidence="2">30S ribosomal protein S9</fullName>
    </alternativeName>
</protein>
<proteinExistence type="inferred from homology"/>
<dbReference type="EMBL" id="CP001102">
    <property type="protein sequence ID" value="ACE05504.1"/>
    <property type="molecule type" value="Genomic_DNA"/>
</dbReference>
<dbReference type="RefSeq" id="WP_012472276.1">
    <property type="nucleotide sequence ID" value="NC_010830.1"/>
</dbReference>
<dbReference type="SMR" id="B3EU85"/>
<dbReference type="STRING" id="452471.Aasi_0051"/>
<dbReference type="KEGG" id="aas:Aasi_0051"/>
<dbReference type="eggNOG" id="COG0103">
    <property type="taxonomic scope" value="Bacteria"/>
</dbReference>
<dbReference type="HOGENOM" id="CLU_046483_2_1_10"/>
<dbReference type="OrthoDB" id="9803965at2"/>
<dbReference type="Proteomes" id="UP000001227">
    <property type="component" value="Chromosome"/>
</dbReference>
<dbReference type="GO" id="GO:0022627">
    <property type="term" value="C:cytosolic small ribosomal subunit"/>
    <property type="evidence" value="ECO:0007669"/>
    <property type="project" value="TreeGrafter"/>
</dbReference>
<dbReference type="GO" id="GO:0003723">
    <property type="term" value="F:RNA binding"/>
    <property type="evidence" value="ECO:0007669"/>
    <property type="project" value="TreeGrafter"/>
</dbReference>
<dbReference type="GO" id="GO:0003735">
    <property type="term" value="F:structural constituent of ribosome"/>
    <property type="evidence" value="ECO:0007669"/>
    <property type="project" value="InterPro"/>
</dbReference>
<dbReference type="GO" id="GO:0006412">
    <property type="term" value="P:translation"/>
    <property type="evidence" value="ECO:0007669"/>
    <property type="project" value="UniProtKB-UniRule"/>
</dbReference>
<dbReference type="FunFam" id="3.30.230.10:FF:000001">
    <property type="entry name" value="30S ribosomal protein S9"/>
    <property type="match status" value="1"/>
</dbReference>
<dbReference type="Gene3D" id="3.30.230.10">
    <property type="match status" value="1"/>
</dbReference>
<dbReference type="HAMAP" id="MF_00532_B">
    <property type="entry name" value="Ribosomal_uS9_B"/>
    <property type="match status" value="1"/>
</dbReference>
<dbReference type="InterPro" id="IPR020568">
    <property type="entry name" value="Ribosomal_Su5_D2-typ_SF"/>
</dbReference>
<dbReference type="InterPro" id="IPR000754">
    <property type="entry name" value="Ribosomal_uS9"/>
</dbReference>
<dbReference type="InterPro" id="IPR023035">
    <property type="entry name" value="Ribosomal_uS9_bac/plastid"/>
</dbReference>
<dbReference type="InterPro" id="IPR020574">
    <property type="entry name" value="Ribosomal_uS9_CS"/>
</dbReference>
<dbReference type="InterPro" id="IPR014721">
    <property type="entry name" value="Ribsml_uS5_D2-typ_fold_subgr"/>
</dbReference>
<dbReference type="NCBIfam" id="NF001099">
    <property type="entry name" value="PRK00132.1"/>
    <property type="match status" value="1"/>
</dbReference>
<dbReference type="PANTHER" id="PTHR21569">
    <property type="entry name" value="RIBOSOMAL PROTEIN S9"/>
    <property type="match status" value="1"/>
</dbReference>
<dbReference type="PANTHER" id="PTHR21569:SF1">
    <property type="entry name" value="SMALL RIBOSOMAL SUBUNIT PROTEIN US9M"/>
    <property type="match status" value="1"/>
</dbReference>
<dbReference type="Pfam" id="PF00380">
    <property type="entry name" value="Ribosomal_S9"/>
    <property type="match status" value="1"/>
</dbReference>
<dbReference type="SUPFAM" id="SSF54211">
    <property type="entry name" value="Ribosomal protein S5 domain 2-like"/>
    <property type="match status" value="1"/>
</dbReference>
<dbReference type="PROSITE" id="PS00360">
    <property type="entry name" value="RIBOSOMAL_S9"/>
    <property type="match status" value="1"/>
</dbReference>
<evidence type="ECO:0000255" key="1">
    <source>
        <dbReference type="HAMAP-Rule" id="MF_00532"/>
    </source>
</evidence>
<evidence type="ECO:0000305" key="2"/>
<gene>
    <name evidence="1" type="primary">rpsI</name>
    <name type="ordered locus">Aasi_0051</name>
</gene>
<reference key="1">
    <citation type="journal article" date="2010" name="J. Bacteriol.">
        <title>The genome of the amoeba symbiont 'Candidatus Amoebophilus asiaticus' reveals common mechanisms for host cell interaction among amoeba-associated bacteria.</title>
        <authorList>
            <person name="Schmitz-Esser S."/>
            <person name="Tischler P."/>
            <person name="Arnold R."/>
            <person name="Montanaro J."/>
            <person name="Wagner M."/>
            <person name="Rattei T."/>
            <person name="Horn M."/>
        </authorList>
    </citation>
    <scope>NUCLEOTIDE SEQUENCE [LARGE SCALE GENOMIC DNA]</scope>
    <source>
        <strain>5a2</strain>
    </source>
</reference>
<feature type="chain" id="PRO_1000128069" description="Small ribosomal subunit protein uS9">
    <location>
        <begin position="1"/>
        <end position="128"/>
    </location>
</feature>
<name>RS9_AMOA5</name>
<keyword id="KW-1185">Reference proteome</keyword>
<keyword id="KW-0687">Ribonucleoprotein</keyword>
<keyword id="KW-0689">Ribosomal protein</keyword>
<accession>B3EU85</accession>
<sequence length="128" mass="14503">MEIINAVGRRKTSIARIYLSNGKGDISINKTSLEKYFPSEAIITLVKQPLQQIEAIDQYDIKINVKGGGFKGQAEAVRLGIARALCEVNPSFRPSLKKEGFLTRDSRMVERKKYGHKKARKSFQFSKR</sequence>
<organism>
    <name type="scientific">Amoebophilus asiaticus (strain 5a2)</name>
    <dbReference type="NCBI Taxonomy" id="452471"/>
    <lineage>
        <taxon>Bacteria</taxon>
        <taxon>Pseudomonadati</taxon>
        <taxon>Bacteroidota</taxon>
        <taxon>Cytophagia</taxon>
        <taxon>Cytophagales</taxon>
        <taxon>Amoebophilaceae</taxon>
        <taxon>Candidatus Amoebophilus</taxon>
    </lineage>
</organism>
<comment type="similarity">
    <text evidence="1">Belongs to the universal ribosomal protein uS9 family.</text>
</comment>